<name>GPMA_STRTD</name>
<comment type="function">
    <text evidence="1">Catalyzes the interconversion of 2-phosphoglycerate and 3-phosphoglycerate.</text>
</comment>
<comment type="catalytic activity">
    <reaction evidence="1">
        <text>(2R)-2-phosphoglycerate = (2R)-3-phosphoglycerate</text>
        <dbReference type="Rhea" id="RHEA:15901"/>
        <dbReference type="ChEBI" id="CHEBI:58272"/>
        <dbReference type="ChEBI" id="CHEBI:58289"/>
        <dbReference type="EC" id="5.4.2.11"/>
    </reaction>
</comment>
<comment type="pathway">
    <text evidence="1">Carbohydrate degradation; glycolysis; pyruvate from D-glyceraldehyde 3-phosphate: step 3/5.</text>
</comment>
<comment type="similarity">
    <text evidence="1">Belongs to the phosphoglycerate mutase family. BPG-dependent PGAM subfamily.</text>
</comment>
<evidence type="ECO:0000255" key="1">
    <source>
        <dbReference type="HAMAP-Rule" id="MF_01039"/>
    </source>
</evidence>
<reference key="1">
    <citation type="journal article" date="2006" name="Proc. Natl. Acad. Sci. U.S.A.">
        <title>Comparative genomics of the lactic acid bacteria.</title>
        <authorList>
            <person name="Makarova K.S."/>
            <person name="Slesarev A."/>
            <person name="Wolf Y.I."/>
            <person name="Sorokin A."/>
            <person name="Mirkin B."/>
            <person name="Koonin E.V."/>
            <person name="Pavlov A."/>
            <person name="Pavlova N."/>
            <person name="Karamychev V."/>
            <person name="Polouchine N."/>
            <person name="Shakhova V."/>
            <person name="Grigoriev I."/>
            <person name="Lou Y."/>
            <person name="Rohksar D."/>
            <person name="Lucas S."/>
            <person name="Huang K."/>
            <person name="Goodstein D.M."/>
            <person name="Hawkins T."/>
            <person name="Plengvidhya V."/>
            <person name="Welker D."/>
            <person name="Hughes J."/>
            <person name="Goh Y."/>
            <person name="Benson A."/>
            <person name="Baldwin K."/>
            <person name="Lee J.-H."/>
            <person name="Diaz-Muniz I."/>
            <person name="Dosti B."/>
            <person name="Smeianov V."/>
            <person name="Wechter W."/>
            <person name="Barabote R."/>
            <person name="Lorca G."/>
            <person name="Altermann E."/>
            <person name="Barrangou R."/>
            <person name="Ganesan B."/>
            <person name="Xie Y."/>
            <person name="Rawsthorne H."/>
            <person name="Tamir D."/>
            <person name="Parker C."/>
            <person name="Breidt F."/>
            <person name="Broadbent J.R."/>
            <person name="Hutkins R."/>
            <person name="O'Sullivan D."/>
            <person name="Steele J."/>
            <person name="Unlu G."/>
            <person name="Saier M.H. Jr."/>
            <person name="Klaenhammer T."/>
            <person name="Richardson P."/>
            <person name="Kozyavkin S."/>
            <person name="Weimer B.C."/>
            <person name="Mills D.A."/>
        </authorList>
    </citation>
    <scope>NUCLEOTIDE SEQUENCE [LARGE SCALE GENOMIC DNA]</scope>
    <source>
        <strain>ATCC BAA-491 / LMD-9</strain>
    </source>
</reference>
<organism>
    <name type="scientific">Streptococcus thermophilus (strain ATCC BAA-491 / LMD-9)</name>
    <dbReference type="NCBI Taxonomy" id="322159"/>
    <lineage>
        <taxon>Bacteria</taxon>
        <taxon>Bacillati</taxon>
        <taxon>Bacillota</taxon>
        <taxon>Bacilli</taxon>
        <taxon>Lactobacillales</taxon>
        <taxon>Streptococcaceae</taxon>
        <taxon>Streptococcus</taxon>
    </lineage>
</organism>
<gene>
    <name evidence="1" type="primary">gpmA</name>
    <name type="ordered locus">STER_1172</name>
</gene>
<feature type="chain" id="PRO_1000064112" description="2,3-bisphosphoglycerate-dependent phosphoglycerate mutase">
    <location>
        <begin position="1"/>
        <end position="230"/>
    </location>
</feature>
<feature type="active site" description="Tele-phosphohistidine intermediate" evidence="1">
    <location>
        <position position="9"/>
    </location>
</feature>
<feature type="active site" description="Proton donor/acceptor" evidence="1">
    <location>
        <position position="87"/>
    </location>
</feature>
<feature type="binding site" evidence="1">
    <location>
        <begin position="8"/>
        <end position="15"/>
    </location>
    <ligand>
        <name>substrate</name>
    </ligand>
</feature>
<feature type="binding site" evidence="1">
    <location>
        <begin position="21"/>
        <end position="22"/>
    </location>
    <ligand>
        <name>substrate</name>
    </ligand>
</feature>
<feature type="binding site" evidence="1">
    <location>
        <position position="60"/>
    </location>
    <ligand>
        <name>substrate</name>
    </ligand>
</feature>
<feature type="binding site" evidence="1">
    <location>
        <begin position="87"/>
        <end position="90"/>
    </location>
    <ligand>
        <name>substrate</name>
    </ligand>
</feature>
<feature type="binding site" evidence="1">
    <location>
        <position position="98"/>
    </location>
    <ligand>
        <name>substrate</name>
    </ligand>
</feature>
<feature type="binding site" evidence="1">
    <location>
        <begin position="114"/>
        <end position="115"/>
    </location>
    <ligand>
        <name>substrate</name>
    </ligand>
</feature>
<feature type="binding site" evidence="1">
    <location>
        <begin position="183"/>
        <end position="184"/>
    </location>
    <ligand>
        <name>substrate</name>
    </ligand>
</feature>
<feature type="site" description="Transition state stabilizer" evidence="1">
    <location>
        <position position="182"/>
    </location>
</feature>
<protein>
    <recommendedName>
        <fullName evidence="1">2,3-bisphosphoglycerate-dependent phosphoglycerate mutase</fullName>
        <shortName evidence="1">BPG-dependent PGAM</shortName>
        <shortName evidence="1">PGAM</shortName>
        <shortName evidence="1">Phosphoglyceromutase</shortName>
        <shortName evidence="1">dPGM</shortName>
        <ecNumber evidence="1">5.4.2.11</ecNumber>
    </recommendedName>
</protein>
<dbReference type="EC" id="5.4.2.11" evidence="1"/>
<dbReference type="EMBL" id="CP000419">
    <property type="protein sequence ID" value="ABJ66363.1"/>
    <property type="molecule type" value="Genomic_DNA"/>
</dbReference>
<dbReference type="RefSeq" id="WP_011226119.1">
    <property type="nucleotide sequence ID" value="NZ_CP086001.1"/>
</dbReference>
<dbReference type="SMR" id="Q03KA9"/>
<dbReference type="KEGG" id="ste:STER_1172"/>
<dbReference type="HOGENOM" id="CLU_033323_1_5_9"/>
<dbReference type="UniPathway" id="UPA00109">
    <property type="reaction ID" value="UER00186"/>
</dbReference>
<dbReference type="GO" id="GO:0004619">
    <property type="term" value="F:phosphoglycerate mutase activity"/>
    <property type="evidence" value="ECO:0007669"/>
    <property type="project" value="UniProtKB-EC"/>
</dbReference>
<dbReference type="GO" id="GO:0006094">
    <property type="term" value="P:gluconeogenesis"/>
    <property type="evidence" value="ECO:0007669"/>
    <property type="project" value="UniProtKB-UniRule"/>
</dbReference>
<dbReference type="GO" id="GO:0006096">
    <property type="term" value="P:glycolytic process"/>
    <property type="evidence" value="ECO:0007669"/>
    <property type="project" value="UniProtKB-UniRule"/>
</dbReference>
<dbReference type="CDD" id="cd07067">
    <property type="entry name" value="HP_PGM_like"/>
    <property type="match status" value="1"/>
</dbReference>
<dbReference type="FunFam" id="3.40.50.1240:FF:000003">
    <property type="entry name" value="2,3-bisphosphoglycerate-dependent phosphoglycerate mutase"/>
    <property type="match status" value="1"/>
</dbReference>
<dbReference type="Gene3D" id="3.40.50.1240">
    <property type="entry name" value="Phosphoglycerate mutase-like"/>
    <property type="match status" value="1"/>
</dbReference>
<dbReference type="HAMAP" id="MF_01039">
    <property type="entry name" value="PGAM_GpmA"/>
    <property type="match status" value="1"/>
</dbReference>
<dbReference type="InterPro" id="IPR013078">
    <property type="entry name" value="His_Pase_superF_clade-1"/>
</dbReference>
<dbReference type="InterPro" id="IPR029033">
    <property type="entry name" value="His_PPase_superfam"/>
</dbReference>
<dbReference type="InterPro" id="IPR005952">
    <property type="entry name" value="Phosphogly_mut1"/>
</dbReference>
<dbReference type="NCBIfam" id="TIGR01258">
    <property type="entry name" value="pgm_1"/>
    <property type="match status" value="1"/>
</dbReference>
<dbReference type="NCBIfam" id="NF010713">
    <property type="entry name" value="PRK14115.1"/>
    <property type="match status" value="1"/>
</dbReference>
<dbReference type="NCBIfam" id="NF010715">
    <property type="entry name" value="PRK14117.1"/>
    <property type="match status" value="1"/>
</dbReference>
<dbReference type="PANTHER" id="PTHR11931">
    <property type="entry name" value="PHOSPHOGLYCERATE MUTASE"/>
    <property type="match status" value="1"/>
</dbReference>
<dbReference type="Pfam" id="PF00300">
    <property type="entry name" value="His_Phos_1"/>
    <property type="match status" value="2"/>
</dbReference>
<dbReference type="PIRSF" id="PIRSF000709">
    <property type="entry name" value="6PFK_2-Ptase"/>
    <property type="match status" value="1"/>
</dbReference>
<dbReference type="SMART" id="SM00855">
    <property type="entry name" value="PGAM"/>
    <property type="match status" value="1"/>
</dbReference>
<dbReference type="SUPFAM" id="SSF53254">
    <property type="entry name" value="Phosphoglycerate mutase-like"/>
    <property type="match status" value="1"/>
</dbReference>
<proteinExistence type="inferred from homology"/>
<keyword id="KW-0312">Gluconeogenesis</keyword>
<keyword id="KW-0324">Glycolysis</keyword>
<keyword id="KW-0413">Isomerase</keyword>
<sequence length="230" mass="26190">MVKLVFARHGESEWNKANLFTGWADVDLSEKGTQQAIDAGKLIKEAGIEFDKAYTSVLKRAIKTTNLALEASDQLWVPVEKSWRLNERHYGGLTGKNKAEAAEQFGDEQVHIWRRSYDVLPPKMDRDDEYSAHKDRRYASLDDSVIPDAENLKVTLERALPFWEDKIAPALKDGKNVFVGAHGNSIRALVKHIKKLSDDEIMDVEIPNFPPLVFEFDEKLNVVSEYYLGK</sequence>
<accession>Q03KA9</accession>